<gene>
    <name type="primary">spaM</name>
    <name type="synonym">spa13</name>
</gene>
<geneLocation type="plasmid">
    <name>pINV</name>
</geneLocation>
<evidence type="ECO:0000250" key="1"/>
<evidence type="ECO:0000305" key="2"/>
<accession>P0A1K4</accession>
<accession>P40708</accession>
<accession>P81997</accession>
<accession>P96019</accession>
<accession>Q9AFS0</accession>
<name>SPAM_SHISO</name>
<reference key="1">
    <citation type="submission" date="1995-05" db="EMBL/GenBank/DDBJ databases">
        <title>Comparison and high conservation of nucleotide sequences of spa-mxi regions between S.sonnei and S.flexneri -- identification of a new gene coding plausible membrane protein.</title>
        <authorList>
            <person name="Arakawa E."/>
            <person name="Kato J."/>
            <person name="Ito K."/>
            <person name="Watanabe H."/>
        </authorList>
    </citation>
    <scope>NUCLEOTIDE SEQUENCE [GENOMIC DNA]</scope>
    <source>
        <strain>HW383</strain>
    </source>
</reference>
<comment type="function">
    <text evidence="1">Required for surface presentation of invasion plasmid antigens. Could play a role in preserving the translocation competence of the ipa antigens. Required for invasion (By similarity).</text>
</comment>
<comment type="similarity">
    <text evidence="2">Belongs to the SpaM family.</text>
</comment>
<comment type="sequence caution" evidence="2">
    <conflict type="erroneous initiation">
        <sequence resource="EMBL-CDS" id="BAA09159"/>
    </conflict>
</comment>
<protein>
    <recommendedName>
        <fullName>Surface presentation of antigens protein SpaM</fullName>
    </recommendedName>
    <alternativeName>
        <fullName>Spa13 protein</fullName>
    </alternativeName>
</protein>
<proteinExistence type="inferred from homology"/>
<feature type="chain" id="PRO_0000180936" description="Surface presentation of antigens protein SpaM">
    <location>
        <begin position="1"/>
        <end position="112"/>
    </location>
</feature>
<dbReference type="EMBL" id="D50601">
    <property type="protein sequence ID" value="BAA09159.1"/>
    <property type="status" value="ALT_INIT"/>
    <property type="molecule type" value="Genomic_DNA"/>
</dbReference>
<dbReference type="RefSeq" id="WP_000387670.1">
    <property type="nucleotide sequence ID" value="NZ_UIOJ01000326.1"/>
</dbReference>
<dbReference type="SMR" id="P0A1K4"/>
<dbReference type="STRING" id="216599.GCA_000283715_05241"/>
<dbReference type="OMA" id="MEPVGAQ"/>
<dbReference type="InterPro" id="IPR002954">
    <property type="entry name" value="Salm_SPAgM"/>
</dbReference>
<dbReference type="Pfam" id="PF02090">
    <property type="entry name" value="SPAM"/>
    <property type="match status" value="1"/>
</dbReference>
<organism>
    <name type="scientific">Shigella sonnei</name>
    <dbReference type="NCBI Taxonomy" id="624"/>
    <lineage>
        <taxon>Bacteria</taxon>
        <taxon>Pseudomonadati</taxon>
        <taxon>Pseudomonadota</taxon>
        <taxon>Gammaproteobacteria</taxon>
        <taxon>Enterobacterales</taxon>
        <taxon>Enterobacteriaceae</taxon>
        <taxon>Shigella</taxon>
    </lineage>
</organism>
<sequence length="112" mass="13207">MEALDKRIIYFLQLENDLEPVGAQSVSQLFNTRRKIAIVKKHIIQYQSERILLKGRIEEIQKDIDEANASKRKLLHKESKICKRIGLIKRNNFAKQLILDELSQEDMKYGIR</sequence>
<keyword id="KW-0614">Plasmid</keyword>
<keyword id="KW-0843">Virulence</keyword>